<protein>
    <recommendedName>
        <fullName>Alpha-lactalbumin</fullName>
    </recommendedName>
    <alternativeName>
        <fullName>Lactose synthase B protein</fullName>
    </alternativeName>
</protein>
<evidence type="ECO:0000250" key="1">
    <source>
        <dbReference type="UniProtKB" id="P00711"/>
    </source>
</evidence>
<evidence type="ECO:0000255" key="2"/>
<evidence type="ECO:0000255" key="3">
    <source>
        <dbReference type="PROSITE-ProRule" id="PRU00680"/>
    </source>
</evidence>
<evidence type="ECO:0000269" key="4">
    <source>
    </source>
</evidence>
<evidence type="ECO:0000305" key="5"/>
<accession>P09462</accession>
<accession>Q9GKS5</accession>
<feature type="signal peptide" evidence="4">
    <location>
        <begin position="1"/>
        <end position="19"/>
    </location>
</feature>
<feature type="chain" id="PRO_0000018450" description="Alpha-lactalbumin" evidence="4">
    <location>
        <begin position="20"/>
        <end position="142"/>
    </location>
</feature>
<feature type="domain" description="C-type lysozyme" evidence="3">
    <location>
        <begin position="20"/>
        <end position="142"/>
    </location>
</feature>
<feature type="binding site" evidence="1">
    <location>
        <position position="98"/>
    </location>
    <ligand>
        <name>Ca(2+)</name>
        <dbReference type="ChEBI" id="CHEBI:29108"/>
    </ligand>
</feature>
<feature type="binding site" evidence="1">
    <location>
        <position position="101"/>
    </location>
    <ligand>
        <name>Ca(2+)</name>
        <dbReference type="ChEBI" id="CHEBI:29108"/>
    </ligand>
</feature>
<feature type="binding site" evidence="1">
    <location>
        <position position="103"/>
    </location>
    <ligand>
        <name>Ca(2+)</name>
        <dbReference type="ChEBI" id="CHEBI:29108"/>
    </ligand>
</feature>
<feature type="binding site" evidence="1">
    <location>
        <position position="106"/>
    </location>
    <ligand>
        <name>Ca(2+)</name>
        <dbReference type="ChEBI" id="CHEBI:29108"/>
    </ligand>
</feature>
<feature type="binding site" evidence="1">
    <location>
        <position position="107"/>
    </location>
    <ligand>
        <name>Ca(2+)</name>
        <dbReference type="ChEBI" id="CHEBI:29108"/>
    </ligand>
</feature>
<feature type="glycosylation site" description="N-linked (GlcNAc...) asparagine" evidence="2">
    <location>
        <position position="64"/>
    </location>
</feature>
<feature type="glycosylation site" description="N-linked (GlcNAc...) asparagine" evidence="2">
    <location>
        <position position="93"/>
    </location>
</feature>
<feature type="disulfide bond" evidence="3">
    <location>
        <begin position="25"/>
        <end position="139"/>
    </location>
</feature>
<feature type="disulfide bond" evidence="3">
    <location>
        <begin position="47"/>
        <end position="130"/>
    </location>
</feature>
<feature type="disulfide bond" evidence="3">
    <location>
        <begin position="80"/>
        <end position="96"/>
    </location>
</feature>
<feature type="disulfide bond" evidence="3">
    <location>
        <begin position="92"/>
        <end position="110"/>
    </location>
</feature>
<feature type="sequence conflict" description="In Ref. 1; CAA29665." evidence="5" ref="1">
    <original>V</original>
    <variation>A</variation>
    <location>
        <position position="27"/>
    </location>
</feature>
<feature type="sequence conflict" description="In Ref. 1; CAA29665." evidence="5" ref="1">
    <original>E</original>
    <variation>K</variation>
    <location>
        <position position="30"/>
    </location>
</feature>
<feature type="sequence conflict" description="In Ref. 1; CAA29665." evidence="5" ref="1">
    <original>MCV</original>
    <variation>VCA</variation>
    <location>
        <begin position="109"/>
        <end position="111"/>
    </location>
</feature>
<organism>
    <name type="scientific">Ovis aries</name>
    <name type="common">Sheep</name>
    <dbReference type="NCBI Taxonomy" id="9940"/>
    <lineage>
        <taxon>Eukaryota</taxon>
        <taxon>Metazoa</taxon>
        <taxon>Chordata</taxon>
        <taxon>Craniata</taxon>
        <taxon>Vertebrata</taxon>
        <taxon>Euteleostomi</taxon>
        <taxon>Mammalia</taxon>
        <taxon>Eutheria</taxon>
        <taxon>Laurasiatheria</taxon>
        <taxon>Artiodactyla</taxon>
        <taxon>Ruminantia</taxon>
        <taxon>Pecora</taxon>
        <taxon>Bovidae</taxon>
        <taxon>Caprinae</taxon>
        <taxon>Ovis</taxon>
    </lineage>
</organism>
<dbReference type="EMBL" id="X06367">
    <property type="protein sequence ID" value="CAA29665.1"/>
    <property type="molecule type" value="mRNA"/>
</dbReference>
<dbReference type="EMBL" id="AB052168">
    <property type="protein sequence ID" value="BAB18926.1"/>
    <property type="molecule type" value="Genomic_DNA"/>
</dbReference>
<dbReference type="PIR" id="S01178">
    <property type="entry name" value="S01178"/>
</dbReference>
<dbReference type="RefSeq" id="NP_001009797.1">
    <property type="nucleotide sequence ID" value="NM_001009797.1"/>
</dbReference>
<dbReference type="SMR" id="P09462"/>
<dbReference type="STRING" id="9940.ENSOARP00000020650"/>
<dbReference type="GlyCosmos" id="P09462">
    <property type="glycosylation" value="2 sites, No reported glycans"/>
</dbReference>
<dbReference type="PaxDb" id="9940-ENSOARP00000020650"/>
<dbReference type="GeneID" id="443386"/>
<dbReference type="KEGG" id="oas:443386"/>
<dbReference type="CTD" id="3906"/>
<dbReference type="eggNOG" id="ENOG502T8BJ">
    <property type="taxonomic scope" value="Eukaryota"/>
</dbReference>
<dbReference type="OrthoDB" id="17373at2759"/>
<dbReference type="Proteomes" id="UP000002356">
    <property type="component" value="Unplaced"/>
</dbReference>
<dbReference type="GO" id="GO:0005576">
    <property type="term" value="C:extracellular region"/>
    <property type="evidence" value="ECO:0007669"/>
    <property type="project" value="UniProtKB-SubCell"/>
</dbReference>
<dbReference type="GO" id="GO:0005509">
    <property type="term" value="F:calcium ion binding"/>
    <property type="evidence" value="ECO:0007669"/>
    <property type="project" value="InterPro"/>
</dbReference>
<dbReference type="GO" id="GO:0004461">
    <property type="term" value="F:lactose synthase activity"/>
    <property type="evidence" value="ECO:0007669"/>
    <property type="project" value="InterPro"/>
</dbReference>
<dbReference type="GO" id="GO:0003796">
    <property type="term" value="F:lysozyme activity"/>
    <property type="evidence" value="ECO:0007669"/>
    <property type="project" value="TreeGrafter"/>
</dbReference>
<dbReference type="GO" id="GO:0050829">
    <property type="term" value="P:defense response to Gram-negative bacterium"/>
    <property type="evidence" value="ECO:0007669"/>
    <property type="project" value="TreeGrafter"/>
</dbReference>
<dbReference type="GO" id="GO:0050830">
    <property type="term" value="P:defense response to Gram-positive bacterium"/>
    <property type="evidence" value="ECO:0007669"/>
    <property type="project" value="TreeGrafter"/>
</dbReference>
<dbReference type="GO" id="GO:0005989">
    <property type="term" value="P:lactose biosynthetic process"/>
    <property type="evidence" value="ECO:0007669"/>
    <property type="project" value="UniProtKB-KW"/>
</dbReference>
<dbReference type="CDD" id="cd16898">
    <property type="entry name" value="LYZ_LA"/>
    <property type="match status" value="1"/>
</dbReference>
<dbReference type="FunFam" id="1.10.530.10:FF:000014">
    <property type="entry name" value="Alpha-lactalbumin"/>
    <property type="match status" value="1"/>
</dbReference>
<dbReference type="Gene3D" id="1.10.530.10">
    <property type="match status" value="1"/>
</dbReference>
<dbReference type="InterPro" id="IPR001916">
    <property type="entry name" value="Glyco_hydro_22"/>
</dbReference>
<dbReference type="InterPro" id="IPR019799">
    <property type="entry name" value="Glyco_hydro_22_CS"/>
</dbReference>
<dbReference type="InterPro" id="IPR000545">
    <property type="entry name" value="Lactalbumin"/>
</dbReference>
<dbReference type="InterPro" id="IPR023346">
    <property type="entry name" value="Lysozyme-like_dom_sf"/>
</dbReference>
<dbReference type="PANTHER" id="PTHR11407:SF32">
    <property type="entry name" value="ALPHA-LACTALBUMIN"/>
    <property type="match status" value="1"/>
</dbReference>
<dbReference type="PANTHER" id="PTHR11407">
    <property type="entry name" value="LYSOZYME C"/>
    <property type="match status" value="1"/>
</dbReference>
<dbReference type="Pfam" id="PF00062">
    <property type="entry name" value="Lys"/>
    <property type="match status" value="1"/>
</dbReference>
<dbReference type="PRINTS" id="PR00136">
    <property type="entry name" value="LACTALBUMIN"/>
</dbReference>
<dbReference type="PRINTS" id="PR00135">
    <property type="entry name" value="LYZLACT"/>
</dbReference>
<dbReference type="SMART" id="SM00263">
    <property type="entry name" value="LYZ1"/>
    <property type="match status" value="1"/>
</dbReference>
<dbReference type="SUPFAM" id="SSF53955">
    <property type="entry name" value="Lysozyme-like"/>
    <property type="match status" value="1"/>
</dbReference>
<dbReference type="PROSITE" id="PS00128">
    <property type="entry name" value="GLYCOSYL_HYDROL_F22_1"/>
    <property type="match status" value="1"/>
</dbReference>
<dbReference type="PROSITE" id="PS51348">
    <property type="entry name" value="GLYCOSYL_HYDROL_F22_2"/>
    <property type="match status" value="1"/>
</dbReference>
<reference key="1">
    <citation type="journal article" date="1987" name="Biochimie">
        <title>Complete nucleotide sequence of ovine alpha-lactalbumin mRNA.</title>
        <authorList>
            <person name="Gaye P."/>
            <person name="Hue-Delahaie D."/>
            <person name="Mercier J.-C."/>
            <person name="Soulier S."/>
            <person name="Vilotte J.-L."/>
            <person name="Furet J.-P."/>
        </authorList>
    </citation>
    <scope>NUCLEOTIDE SEQUENCE</scope>
</reference>
<reference key="2">
    <citation type="submission" date="2000-12" db="EMBL/GenBank/DDBJ databases">
        <title>Ovis aries alpha lactalbumin.</title>
        <authorList>
            <person name="Yamamoto N."/>
        </authorList>
    </citation>
    <scope>NUCLEOTIDE SEQUENCE</scope>
    <source>
        <strain>Corriedale</strain>
        <tissue>Blood</tissue>
    </source>
</reference>
<reference key="3">
    <citation type="journal article" date="1978" name="Biochem. Biophys. Res. Commun.">
        <title>Amino terminal sequence of the precursor of ovine alpha-lactalbumin.</title>
        <authorList>
            <person name="Mercier J.-C."/>
            <person name="Haze G."/>
            <person name="Gaye P."/>
            <person name="Petrissant G."/>
            <person name="Hue D."/>
            <person name="Boisnard M."/>
        </authorList>
    </citation>
    <scope>PARTIAL PROTEIN SEQUENCE OF 1-35</scope>
</reference>
<keyword id="KW-0106">Calcium</keyword>
<keyword id="KW-0903">Direct protein sequencing</keyword>
<keyword id="KW-1015">Disulfide bond</keyword>
<keyword id="KW-0325">Glycoprotein</keyword>
<keyword id="KW-0422">Lactose biosynthesis</keyword>
<keyword id="KW-0479">Metal-binding</keyword>
<keyword id="KW-0494">Milk protein</keyword>
<keyword id="KW-1185">Reference proteome</keyword>
<keyword id="KW-0964">Secreted</keyword>
<keyword id="KW-0732">Signal</keyword>
<sequence>MMSFVSLLLVGILFHATQAEQLTKCEVFQELKDLKDYGGVSLPEWVCTAFHTSGYDTQAIVQNNDSTEYGLFQINNKIWCKDDQNPHSRNICNISCDKFLDDDLTDDIMCVKKILDKVGINYWLAHKALCSEKLDQWLCEKL</sequence>
<proteinExistence type="evidence at protein level"/>
<gene>
    <name type="primary">LALBA</name>
</gene>
<comment type="function">
    <text>Regulatory subunit of lactose synthase, changes the substrate specificity of galactosyltransferase in the mammary gland making glucose a good acceptor substrate for this enzyme. This enables LS to synthesize lactose, the major carbohydrate component of milk. In other tissues, galactosyltransferase transfers galactose onto the N-acetylglucosamine of the oligosaccharide chains in glycoproteins.</text>
</comment>
<comment type="subunit">
    <text>Lactose synthase (LS) is a heterodimer of a catalytic component, beta1,4-galactosyltransferase (beta4Gal-T1) and a regulatory component, alpha-lactalbumin (LA).</text>
</comment>
<comment type="subcellular location">
    <subcellularLocation>
        <location>Secreted</location>
    </subcellularLocation>
</comment>
<comment type="tissue specificity">
    <text>Mammary gland specific. Secreted in milk.</text>
</comment>
<comment type="similarity">
    <text evidence="3">Belongs to the glycosyl hydrolase 22 family.</text>
</comment>
<name>LALBA_SHEEP</name>